<name>FDOI_ECOL6</name>
<evidence type="ECO:0000250" key="1"/>
<evidence type="ECO:0000305" key="2"/>
<organism>
    <name type="scientific">Escherichia coli O6:H1 (strain CFT073 / ATCC 700928 / UPEC)</name>
    <dbReference type="NCBI Taxonomy" id="199310"/>
    <lineage>
        <taxon>Bacteria</taxon>
        <taxon>Pseudomonadati</taxon>
        <taxon>Pseudomonadota</taxon>
        <taxon>Gammaproteobacteria</taxon>
        <taxon>Enterobacterales</taxon>
        <taxon>Enterobacteriaceae</taxon>
        <taxon>Escherichia</taxon>
    </lineage>
</organism>
<feature type="chain" id="PRO_0000087214" description="Formate dehydrogenase, cytochrome b556(fdo) subunit">
    <location>
        <begin position="1"/>
        <end position="211"/>
    </location>
</feature>
<feature type="topological domain" description="Cytoplasmic" evidence="2">
    <location>
        <begin position="1"/>
        <end position="17"/>
    </location>
</feature>
<feature type="transmembrane region" description="Helical" evidence="2">
    <location>
        <begin position="18"/>
        <end position="32"/>
    </location>
</feature>
<feature type="topological domain" description="Periplasmic" evidence="2">
    <location>
        <begin position="33"/>
        <end position="53"/>
    </location>
</feature>
<feature type="transmembrane region" description="Helical" evidence="2">
    <location>
        <begin position="54"/>
        <end position="72"/>
    </location>
</feature>
<feature type="topological domain" description="Cytoplasmic" evidence="2">
    <location>
        <begin position="73"/>
        <end position="112"/>
    </location>
</feature>
<feature type="transmembrane region" description="Helical" evidence="2">
    <location>
        <begin position="113"/>
        <end position="130"/>
    </location>
</feature>
<feature type="topological domain" description="Periplasmic" evidence="2">
    <location>
        <begin position="131"/>
        <end position="151"/>
    </location>
</feature>
<feature type="transmembrane region" description="Helical" evidence="2">
    <location>
        <begin position="152"/>
        <end position="170"/>
    </location>
</feature>
<feature type="topological domain" description="Cytoplasmic" evidence="2">
    <location>
        <begin position="171"/>
        <end position="211"/>
    </location>
</feature>
<feature type="binding site" description="axial binding residue" evidence="1">
    <location>
        <position position="18"/>
    </location>
    <ligand>
        <name>heme b</name>
        <dbReference type="ChEBI" id="CHEBI:60344"/>
        <label>1</label>
    </ligand>
    <ligandPart>
        <name>Fe</name>
        <dbReference type="ChEBI" id="CHEBI:18248"/>
    </ligandPart>
</feature>
<feature type="binding site" description="axial binding residue" evidence="1">
    <location>
        <position position="57"/>
    </location>
    <ligand>
        <name>heme b</name>
        <dbReference type="ChEBI" id="CHEBI:60344"/>
        <label>2</label>
    </ligand>
    <ligandPart>
        <name>Fe</name>
        <dbReference type="ChEBI" id="CHEBI:18248"/>
    </ligandPart>
</feature>
<feature type="binding site" description="axial binding residue" evidence="1">
    <location>
        <position position="153"/>
    </location>
    <ligand>
        <name>heme b</name>
        <dbReference type="ChEBI" id="CHEBI:60344"/>
        <label>2</label>
    </ligand>
    <ligandPart>
        <name>Fe</name>
        <dbReference type="ChEBI" id="CHEBI:18248"/>
    </ligandPart>
</feature>
<feature type="binding site" description="axial binding residue" evidence="1">
    <location>
        <position position="167"/>
    </location>
    <ligand>
        <name>heme b</name>
        <dbReference type="ChEBI" id="CHEBI:60344"/>
        <label>1</label>
    </ligand>
    <ligandPart>
        <name>Fe</name>
        <dbReference type="ChEBI" id="CHEBI:18248"/>
    </ligandPart>
</feature>
<proteinExistence type="inferred from homology"/>
<reference key="1">
    <citation type="journal article" date="2002" name="Proc. Natl. Acad. Sci. U.S.A.">
        <title>Extensive mosaic structure revealed by the complete genome sequence of uropathogenic Escherichia coli.</title>
        <authorList>
            <person name="Welch R.A."/>
            <person name="Burland V."/>
            <person name="Plunkett G. III"/>
            <person name="Redford P."/>
            <person name="Roesch P."/>
            <person name="Rasko D."/>
            <person name="Buckles E.L."/>
            <person name="Liou S.-R."/>
            <person name="Boutin A."/>
            <person name="Hackett J."/>
            <person name="Stroud D."/>
            <person name="Mayhew G.F."/>
            <person name="Rose D.J."/>
            <person name="Zhou S."/>
            <person name="Schwartz D.C."/>
            <person name="Perna N.T."/>
            <person name="Mobley H.L.T."/>
            <person name="Donnenberg M.S."/>
            <person name="Blattner F.R."/>
        </authorList>
    </citation>
    <scope>NUCLEOTIDE SEQUENCE [LARGE SCALE GENOMIC DNA]</scope>
    <source>
        <strain>CFT073 / ATCC 700928 / UPEC</strain>
    </source>
</reference>
<dbReference type="EMBL" id="AE014075">
    <property type="protein sequence ID" value="AAN83271.1"/>
    <property type="molecule type" value="Genomic_DNA"/>
</dbReference>
<dbReference type="RefSeq" id="WP_000829013.1">
    <property type="nucleotide sequence ID" value="NZ_CP051263.1"/>
</dbReference>
<dbReference type="SMR" id="P0AEL1"/>
<dbReference type="STRING" id="199310.c4842"/>
<dbReference type="GeneID" id="93778046"/>
<dbReference type="KEGG" id="ecc:c4842"/>
<dbReference type="eggNOG" id="COG2864">
    <property type="taxonomic scope" value="Bacteria"/>
</dbReference>
<dbReference type="HOGENOM" id="CLU_091368_1_1_6"/>
<dbReference type="BioCyc" id="ECOL199310:C4842-MONOMER"/>
<dbReference type="Proteomes" id="UP000001410">
    <property type="component" value="Chromosome"/>
</dbReference>
<dbReference type="GO" id="GO:0009326">
    <property type="term" value="C:formate dehydrogenase complex"/>
    <property type="evidence" value="ECO:0007669"/>
    <property type="project" value="InterPro"/>
</dbReference>
<dbReference type="GO" id="GO:0005886">
    <property type="term" value="C:plasma membrane"/>
    <property type="evidence" value="ECO:0007669"/>
    <property type="project" value="UniProtKB-SubCell"/>
</dbReference>
<dbReference type="GO" id="GO:0009055">
    <property type="term" value="F:electron transfer activity"/>
    <property type="evidence" value="ECO:0007669"/>
    <property type="project" value="InterPro"/>
</dbReference>
<dbReference type="GO" id="GO:0008863">
    <property type="term" value="F:formate dehydrogenase (NAD+) activity"/>
    <property type="evidence" value="ECO:0007669"/>
    <property type="project" value="InterPro"/>
</dbReference>
<dbReference type="GO" id="GO:0036397">
    <property type="term" value="F:formate dehydrogenase (quinone) activity"/>
    <property type="evidence" value="ECO:0007669"/>
    <property type="project" value="TreeGrafter"/>
</dbReference>
<dbReference type="GO" id="GO:0046872">
    <property type="term" value="F:metal ion binding"/>
    <property type="evidence" value="ECO:0007669"/>
    <property type="project" value="UniProtKB-KW"/>
</dbReference>
<dbReference type="GO" id="GO:0009061">
    <property type="term" value="P:anaerobic respiration"/>
    <property type="evidence" value="ECO:0007669"/>
    <property type="project" value="TreeGrafter"/>
</dbReference>
<dbReference type="GO" id="GO:0015944">
    <property type="term" value="P:formate oxidation"/>
    <property type="evidence" value="ECO:0007669"/>
    <property type="project" value="TreeGrafter"/>
</dbReference>
<dbReference type="GO" id="GO:0022904">
    <property type="term" value="P:respiratory electron transport chain"/>
    <property type="evidence" value="ECO:0007669"/>
    <property type="project" value="InterPro"/>
</dbReference>
<dbReference type="FunFam" id="1.20.950.20:FF:000002">
    <property type="entry name" value="Formate dehydrogenase cytochrome b556 subunit"/>
    <property type="match status" value="1"/>
</dbReference>
<dbReference type="Gene3D" id="1.20.950.20">
    <property type="entry name" value="Transmembrane di-heme cytochromes, Chain C"/>
    <property type="match status" value="1"/>
</dbReference>
<dbReference type="InterPro" id="IPR011577">
    <property type="entry name" value="Cyt_b561_bac/Ni-Hgenase"/>
</dbReference>
<dbReference type="InterPro" id="IPR016174">
    <property type="entry name" value="Di-haem_cyt_TM"/>
</dbReference>
<dbReference type="InterPro" id="IPR051817">
    <property type="entry name" value="FDH_cytochrome_b556_subunit"/>
</dbReference>
<dbReference type="InterPro" id="IPR006471">
    <property type="entry name" value="Formate_DH_gsu"/>
</dbReference>
<dbReference type="NCBIfam" id="TIGR01583">
    <property type="entry name" value="formate-DH-gamm"/>
    <property type="match status" value="1"/>
</dbReference>
<dbReference type="NCBIfam" id="NF007924">
    <property type="entry name" value="PRK10639.1"/>
    <property type="match status" value="1"/>
</dbReference>
<dbReference type="PANTHER" id="PTHR30074:SF2">
    <property type="entry name" value="FORMATE DEHYDROGENASE, CYTOCHROME B556(FDO) SUBUNIT"/>
    <property type="match status" value="1"/>
</dbReference>
<dbReference type="PANTHER" id="PTHR30074">
    <property type="entry name" value="FORMATE DEHYDROGENASE, NITRATE-INDUCIBLE, CYTOCHROME B556 FDN SUBUNIT"/>
    <property type="match status" value="1"/>
</dbReference>
<dbReference type="Pfam" id="PF01292">
    <property type="entry name" value="Ni_hydr_CYTB"/>
    <property type="match status" value="1"/>
</dbReference>
<dbReference type="SUPFAM" id="SSF81342">
    <property type="entry name" value="Transmembrane di-heme cytochromes"/>
    <property type="match status" value="1"/>
</dbReference>
<comment type="function">
    <text evidence="1">Allows to use formate as major electron donor during aerobic respiration. Subunit gamma is probably the cytochrome b556(FDO) component of the formate dehydrogenase (By similarity).</text>
</comment>
<comment type="cofactor">
    <cofactor evidence="1">
        <name>heme</name>
        <dbReference type="ChEBI" id="CHEBI:30413"/>
    </cofactor>
    <text evidence="1">Binds 2 heme groups per subunit. Heme 1 is located at the cytoplasmic interface, heme 2 is located at the periplasmic interface. Electrons are transferred from the periplasmic to the cytoplasmic heme.</text>
</comment>
<comment type="subunit">
    <text evidence="1">Formate dehydrogenase is a membrane-bound complex, formed by subunits alpha, beta and gamma.</text>
</comment>
<comment type="subcellular location">
    <subcellularLocation>
        <location evidence="1">Cell inner membrane</location>
        <topology evidence="1">Multi-pass membrane protein</topology>
    </subcellularLocation>
</comment>
<comment type="similarity">
    <text evidence="2">Belongs to the formate dehydrogenase gamma subunit family.</text>
</comment>
<accession>P0AEL1</accession>
<accession>P32174</accession>
<sequence>MKRRDTIVRYTAPERINHWITAFCFILAAVSGLGFLFPSFNWLMQIMGTPQLARILHPFVGVVMFASFIIMFFRYWHHNLINRDDIFWAKNIRKIVVNEEVGDTGRYNFGQKCVFWAAIIFLVLLLVSGVIIWRPYFAPAFSIPVIRFALMLHSFAAVALIVVIMVHIYAALWVKGTITAMVEGWVTSAWAKKHHPRWYREVRKTTEKKAE</sequence>
<gene>
    <name type="primary">fdoI</name>
    <name type="ordered locus">c4842</name>
</gene>
<protein>
    <recommendedName>
        <fullName>Formate dehydrogenase, cytochrome b556(fdo) subunit</fullName>
    </recommendedName>
    <alternativeName>
        <fullName>Aerobic formate dehydrogenase cytochrome b556 subunit</fullName>
    </alternativeName>
    <alternativeName>
        <fullName>FDH-Z subunit gamma</fullName>
    </alternativeName>
    <alternativeName>
        <fullName>Formate dehydrogenase-O subunit gamma</fullName>
    </alternativeName>
</protein>
<keyword id="KW-0997">Cell inner membrane</keyword>
<keyword id="KW-1003">Cell membrane</keyword>
<keyword id="KW-0249">Electron transport</keyword>
<keyword id="KW-0349">Heme</keyword>
<keyword id="KW-0408">Iron</keyword>
<keyword id="KW-0472">Membrane</keyword>
<keyword id="KW-0479">Metal-binding</keyword>
<keyword id="KW-1185">Reference proteome</keyword>
<keyword id="KW-0812">Transmembrane</keyword>
<keyword id="KW-1133">Transmembrane helix</keyword>
<keyword id="KW-0813">Transport</keyword>